<evidence type="ECO:0000250" key="1"/>
<evidence type="ECO:0000305" key="2"/>
<sequence>VERPPVWLMRQAGRYMKSYQNLCEKYPLFRERSENVDLVVEISLQPWKVFKPDGVILFSDILTPLPGMNIPFDIVKGKGPVIYDPLRTAAAVNEVREFVPEEWVPYVGQALNLLRGEVKNEAAVLGFVGAPFTLASYCVEGGSSKNFSKIKRMAFAEPAILHNLLQKFTTSMANYIKYQADNGAQAVQIFDSWATELSPVDFEEFSLPYLKQIVDSVKETHPDLPLILYASGSGGLLERLPLTGVDVVSLDWTVDMAEGRKRLGSNIAVQGNVDPGVLFGSKEFITKRIYDTVQKAGSQGHVLNLGHGIKVGTPEENVAHFFEVAKGIRY</sequence>
<dbReference type="EC" id="4.1.1.37"/>
<dbReference type="EMBL" id="X82832">
    <property type="protein sequence ID" value="CAA58039.1"/>
    <property type="molecule type" value="mRNA"/>
</dbReference>
<dbReference type="PIR" id="S55733">
    <property type="entry name" value="S55733"/>
</dbReference>
<dbReference type="SMR" id="Q42855"/>
<dbReference type="UniPathway" id="UPA00251">
    <property type="reaction ID" value="UER00321"/>
</dbReference>
<dbReference type="ExpressionAtlas" id="Q42855">
    <property type="expression patterns" value="baseline and differential"/>
</dbReference>
<dbReference type="GO" id="GO:0009507">
    <property type="term" value="C:chloroplast"/>
    <property type="evidence" value="ECO:0007669"/>
    <property type="project" value="UniProtKB-SubCell"/>
</dbReference>
<dbReference type="GO" id="GO:0004853">
    <property type="term" value="F:uroporphyrinogen decarboxylase activity"/>
    <property type="evidence" value="ECO:0007669"/>
    <property type="project" value="UniProtKB-EC"/>
</dbReference>
<dbReference type="GO" id="GO:0015995">
    <property type="term" value="P:chlorophyll biosynthetic process"/>
    <property type="evidence" value="ECO:0007669"/>
    <property type="project" value="UniProtKB-KW"/>
</dbReference>
<dbReference type="GO" id="GO:0006782">
    <property type="term" value="P:protoporphyrinogen IX biosynthetic process"/>
    <property type="evidence" value="ECO:0007669"/>
    <property type="project" value="UniProtKB-UniPathway"/>
</dbReference>
<dbReference type="CDD" id="cd00717">
    <property type="entry name" value="URO-D"/>
    <property type="match status" value="1"/>
</dbReference>
<dbReference type="FunFam" id="3.20.20.210:FF:000006">
    <property type="entry name" value="Uroporphyrinogen decarboxylase"/>
    <property type="match status" value="1"/>
</dbReference>
<dbReference type="Gene3D" id="3.20.20.210">
    <property type="match status" value="1"/>
</dbReference>
<dbReference type="HAMAP" id="MF_00218">
    <property type="entry name" value="URO_D"/>
    <property type="match status" value="1"/>
</dbReference>
<dbReference type="InterPro" id="IPR038071">
    <property type="entry name" value="UROD/MetE-like_sf"/>
</dbReference>
<dbReference type="InterPro" id="IPR006361">
    <property type="entry name" value="Uroporphyrinogen_deCO2ase_HemE"/>
</dbReference>
<dbReference type="InterPro" id="IPR000257">
    <property type="entry name" value="Uroporphyrinogen_deCOase"/>
</dbReference>
<dbReference type="NCBIfam" id="TIGR01464">
    <property type="entry name" value="hemE"/>
    <property type="match status" value="1"/>
</dbReference>
<dbReference type="PANTHER" id="PTHR21091">
    <property type="entry name" value="METHYLTETRAHYDROFOLATE:HOMOCYSTEINE METHYLTRANSFERASE RELATED"/>
    <property type="match status" value="1"/>
</dbReference>
<dbReference type="PANTHER" id="PTHR21091:SF169">
    <property type="entry name" value="UROPORPHYRINOGEN DECARBOXYLASE"/>
    <property type="match status" value="1"/>
</dbReference>
<dbReference type="Pfam" id="PF01208">
    <property type="entry name" value="URO-D"/>
    <property type="match status" value="1"/>
</dbReference>
<dbReference type="SUPFAM" id="SSF51726">
    <property type="entry name" value="UROD/MetE-like"/>
    <property type="match status" value="1"/>
</dbReference>
<dbReference type="PROSITE" id="PS00906">
    <property type="entry name" value="UROD_1"/>
    <property type="match status" value="1"/>
</dbReference>
<dbReference type="PROSITE" id="PS00907">
    <property type="entry name" value="UROD_2"/>
    <property type="match status" value="1"/>
</dbReference>
<keyword id="KW-0149">Chlorophyll biosynthesis</keyword>
<keyword id="KW-0150">Chloroplast</keyword>
<keyword id="KW-0210">Decarboxylase</keyword>
<keyword id="KW-0456">Lyase</keyword>
<keyword id="KW-0934">Plastid</keyword>
<keyword id="KW-0627">Porphyrin biosynthesis</keyword>
<accession>Q42855</accession>
<organism>
    <name type="scientific">Hordeum vulgare</name>
    <name type="common">Barley</name>
    <dbReference type="NCBI Taxonomy" id="4513"/>
    <lineage>
        <taxon>Eukaryota</taxon>
        <taxon>Viridiplantae</taxon>
        <taxon>Streptophyta</taxon>
        <taxon>Embryophyta</taxon>
        <taxon>Tracheophyta</taxon>
        <taxon>Spermatophyta</taxon>
        <taxon>Magnoliopsida</taxon>
        <taxon>Liliopsida</taxon>
        <taxon>Poales</taxon>
        <taxon>Poaceae</taxon>
        <taxon>BOP clade</taxon>
        <taxon>Pooideae</taxon>
        <taxon>Triticodae</taxon>
        <taxon>Triticeae</taxon>
        <taxon>Hordeinae</taxon>
        <taxon>Hordeum</taxon>
    </lineage>
</organism>
<name>DCUP_HORVU</name>
<proteinExistence type="evidence at transcript level"/>
<comment type="function">
    <text evidence="1">Catalyzes the decarboxylation of four acetate groups of uroporphyrinogen-III to yield coproporphyrinogen-III.</text>
</comment>
<comment type="catalytic activity">
    <reaction>
        <text>uroporphyrinogen III + 4 H(+) = coproporphyrinogen III + 4 CO2</text>
        <dbReference type="Rhea" id="RHEA:19865"/>
        <dbReference type="ChEBI" id="CHEBI:15378"/>
        <dbReference type="ChEBI" id="CHEBI:16526"/>
        <dbReference type="ChEBI" id="CHEBI:57308"/>
        <dbReference type="ChEBI" id="CHEBI:57309"/>
        <dbReference type="EC" id="4.1.1.37"/>
    </reaction>
</comment>
<comment type="pathway">
    <text>Porphyrin-containing compound metabolism; protoporphyrin-IX biosynthesis; coproporphyrinogen-III from 5-aminolevulinate: step 4/4.</text>
</comment>
<comment type="subunit">
    <text evidence="1">Homodimer.</text>
</comment>
<comment type="subcellular location">
    <subcellularLocation>
        <location>Plastid</location>
        <location>Chloroplast</location>
    </subcellularLocation>
</comment>
<comment type="similarity">
    <text evidence="2">Belongs to the uroporphyrinogen decarboxylase family.</text>
</comment>
<reference key="1">
    <citation type="journal article" date="1995" name="Plant Mol. Biol.">
        <title>Isolation, sequencing and expression of cDNA sequences encoding uroporphyrinogen decarboxylase from tobacco and barley.</title>
        <authorList>
            <person name="Mock H.-P."/>
            <person name="Trainotti L."/>
            <person name="Kruse E."/>
            <person name="Grimm B."/>
        </authorList>
    </citation>
    <scope>NUCLEOTIDE SEQUENCE [MRNA]</scope>
    <source>
        <tissue>Leaf</tissue>
    </source>
</reference>
<feature type="chain" id="PRO_0000187575" description="Uroporphyrinogen decarboxylase">
    <location>
        <begin position="1" status="less than"/>
        <end position="330"/>
    </location>
</feature>
<feature type="binding site" evidence="1">
    <location>
        <begin position="10"/>
        <end position="14"/>
    </location>
    <ligand>
        <name>substrate</name>
    </ligand>
</feature>
<feature type="binding site" evidence="1">
    <location>
        <position position="29"/>
    </location>
    <ligand>
        <name>substrate</name>
    </ligand>
</feature>
<feature type="binding site" evidence="1">
    <location>
        <position position="59"/>
    </location>
    <ligand>
        <name>substrate</name>
    </ligand>
</feature>
<feature type="binding site" evidence="1">
    <location>
        <position position="60"/>
    </location>
    <ligand>
        <name>substrate</name>
    </ligand>
</feature>
<feature type="binding site" evidence="1">
    <location>
        <position position="137"/>
    </location>
    <ligand>
        <name>substrate</name>
    </ligand>
</feature>
<feature type="binding site" evidence="1">
    <location>
        <position position="192"/>
    </location>
    <ligand>
        <name>substrate</name>
    </ligand>
</feature>
<feature type="binding site" evidence="1">
    <location>
        <position position="307"/>
    </location>
    <ligand>
        <name>substrate</name>
    </ligand>
</feature>
<feature type="site" description="Transition state stabilizer" evidence="1">
    <location>
        <position position="60"/>
    </location>
</feature>
<feature type="non-terminal residue">
    <location>
        <position position="1"/>
    </location>
</feature>
<gene>
    <name type="primary">DCUP</name>
</gene>
<protein>
    <recommendedName>
        <fullName>Uroporphyrinogen decarboxylase</fullName>
        <shortName>UPD</shortName>
        <shortName>URO-D</shortName>
        <ecNumber>4.1.1.37</ecNumber>
    </recommendedName>
</protein>